<sequence>MRHRKSGRHLSRTSSHRKAMFQNMAVSLFEHELIKTTLPKAKELRRVAEPLITLAKTDSVANRRLAFDRTRSKAIVGKLFNDLGKRYATREGGYLRILKCGFRAGDNAPMAYVELVDRAVGGEAVSAE</sequence>
<proteinExistence type="inferred from homology"/>
<comment type="subunit">
    <text evidence="1">Part of the 50S ribosomal subunit. Contacts protein L32.</text>
</comment>
<comment type="similarity">
    <text evidence="1">Belongs to the bacterial ribosomal protein bL17 family.</text>
</comment>
<keyword id="KW-0687">Ribonucleoprotein</keyword>
<keyword id="KW-0689">Ribosomal protein</keyword>
<protein>
    <recommendedName>
        <fullName evidence="1">Large ribosomal subunit protein bL17</fullName>
    </recommendedName>
    <alternativeName>
        <fullName evidence="2">50S ribosomal protein L17</fullName>
    </alternativeName>
</protein>
<reference key="1">
    <citation type="journal article" date="2009" name="Genome Biol.">
        <title>Genomic and genetic analyses of diversity and plant interactions of Pseudomonas fluorescens.</title>
        <authorList>
            <person name="Silby M.W."/>
            <person name="Cerdeno-Tarraga A.M."/>
            <person name="Vernikos G.S."/>
            <person name="Giddens S.R."/>
            <person name="Jackson R.W."/>
            <person name="Preston G.M."/>
            <person name="Zhang X.-X."/>
            <person name="Moon C.D."/>
            <person name="Gehrig S.M."/>
            <person name="Godfrey S.A.C."/>
            <person name="Knight C.G."/>
            <person name="Malone J.G."/>
            <person name="Robinson Z."/>
            <person name="Spiers A.J."/>
            <person name="Harris S."/>
            <person name="Challis G.L."/>
            <person name="Yaxley A.M."/>
            <person name="Harris D."/>
            <person name="Seeger K."/>
            <person name="Murphy L."/>
            <person name="Rutter S."/>
            <person name="Squares R."/>
            <person name="Quail M.A."/>
            <person name="Saunders E."/>
            <person name="Mavromatis K."/>
            <person name="Brettin T.S."/>
            <person name="Bentley S.D."/>
            <person name="Hothersall J."/>
            <person name="Stephens E."/>
            <person name="Thomas C.M."/>
            <person name="Parkhill J."/>
            <person name="Levy S.B."/>
            <person name="Rainey P.B."/>
            <person name="Thomson N.R."/>
        </authorList>
    </citation>
    <scope>NUCLEOTIDE SEQUENCE [LARGE SCALE GENOMIC DNA]</scope>
    <source>
        <strain>Pf0-1</strain>
    </source>
</reference>
<name>RL17_PSEPF</name>
<feature type="chain" id="PRO_1000055921" description="Large ribosomal subunit protein bL17">
    <location>
        <begin position="1"/>
        <end position="128"/>
    </location>
</feature>
<organism>
    <name type="scientific">Pseudomonas fluorescens (strain Pf0-1)</name>
    <dbReference type="NCBI Taxonomy" id="205922"/>
    <lineage>
        <taxon>Bacteria</taxon>
        <taxon>Pseudomonadati</taxon>
        <taxon>Pseudomonadota</taxon>
        <taxon>Gammaproteobacteria</taxon>
        <taxon>Pseudomonadales</taxon>
        <taxon>Pseudomonadaceae</taxon>
        <taxon>Pseudomonas</taxon>
    </lineage>
</organism>
<accession>Q3K613</accession>
<dbReference type="EMBL" id="CP000094">
    <property type="protein sequence ID" value="ABA76791.1"/>
    <property type="molecule type" value="Genomic_DNA"/>
</dbReference>
<dbReference type="RefSeq" id="WP_007955635.1">
    <property type="nucleotide sequence ID" value="NC_007492.2"/>
</dbReference>
<dbReference type="SMR" id="Q3K613"/>
<dbReference type="KEGG" id="pfo:Pfl01_5054"/>
<dbReference type="eggNOG" id="COG0203">
    <property type="taxonomic scope" value="Bacteria"/>
</dbReference>
<dbReference type="HOGENOM" id="CLU_074407_2_0_6"/>
<dbReference type="Proteomes" id="UP000002704">
    <property type="component" value="Chromosome"/>
</dbReference>
<dbReference type="GO" id="GO:0022625">
    <property type="term" value="C:cytosolic large ribosomal subunit"/>
    <property type="evidence" value="ECO:0007669"/>
    <property type="project" value="TreeGrafter"/>
</dbReference>
<dbReference type="GO" id="GO:0003735">
    <property type="term" value="F:structural constituent of ribosome"/>
    <property type="evidence" value="ECO:0007669"/>
    <property type="project" value="InterPro"/>
</dbReference>
<dbReference type="GO" id="GO:0006412">
    <property type="term" value="P:translation"/>
    <property type="evidence" value="ECO:0007669"/>
    <property type="project" value="UniProtKB-UniRule"/>
</dbReference>
<dbReference type="FunFam" id="3.90.1030.10:FF:000001">
    <property type="entry name" value="50S ribosomal protein L17"/>
    <property type="match status" value="1"/>
</dbReference>
<dbReference type="Gene3D" id="3.90.1030.10">
    <property type="entry name" value="Ribosomal protein L17"/>
    <property type="match status" value="1"/>
</dbReference>
<dbReference type="HAMAP" id="MF_01368">
    <property type="entry name" value="Ribosomal_bL17"/>
    <property type="match status" value="1"/>
</dbReference>
<dbReference type="InterPro" id="IPR000456">
    <property type="entry name" value="Ribosomal_bL17"/>
</dbReference>
<dbReference type="InterPro" id="IPR047859">
    <property type="entry name" value="Ribosomal_bL17_CS"/>
</dbReference>
<dbReference type="InterPro" id="IPR036373">
    <property type="entry name" value="Ribosomal_bL17_sf"/>
</dbReference>
<dbReference type="NCBIfam" id="TIGR00059">
    <property type="entry name" value="L17"/>
    <property type="match status" value="1"/>
</dbReference>
<dbReference type="PANTHER" id="PTHR14413:SF16">
    <property type="entry name" value="LARGE RIBOSOMAL SUBUNIT PROTEIN BL17M"/>
    <property type="match status" value="1"/>
</dbReference>
<dbReference type="PANTHER" id="PTHR14413">
    <property type="entry name" value="RIBOSOMAL PROTEIN L17"/>
    <property type="match status" value="1"/>
</dbReference>
<dbReference type="Pfam" id="PF01196">
    <property type="entry name" value="Ribosomal_L17"/>
    <property type="match status" value="1"/>
</dbReference>
<dbReference type="SUPFAM" id="SSF64263">
    <property type="entry name" value="Prokaryotic ribosomal protein L17"/>
    <property type="match status" value="1"/>
</dbReference>
<dbReference type="PROSITE" id="PS01167">
    <property type="entry name" value="RIBOSOMAL_L17"/>
    <property type="match status" value="1"/>
</dbReference>
<gene>
    <name evidence="1" type="primary">rplQ</name>
    <name type="ordered locus">Pfl01_5054</name>
</gene>
<evidence type="ECO:0000255" key="1">
    <source>
        <dbReference type="HAMAP-Rule" id="MF_01368"/>
    </source>
</evidence>
<evidence type="ECO:0000305" key="2"/>